<comment type="function">
    <text evidence="1">Catalyzes the conversion of 4-hydroxy-tetrahydrodipicolinate (HTPA) to tetrahydrodipicolinate.</text>
</comment>
<comment type="catalytic activity">
    <reaction evidence="1">
        <text>(S)-2,3,4,5-tetrahydrodipicolinate + NAD(+) + H2O = (2S,4S)-4-hydroxy-2,3,4,5-tetrahydrodipicolinate + NADH + H(+)</text>
        <dbReference type="Rhea" id="RHEA:35323"/>
        <dbReference type="ChEBI" id="CHEBI:15377"/>
        <dbReference type="ChEBI" id="CHEBI:15378"/>
        <dbReference type="ChEBI" id="CHEBI:16845"/>
        <dbReference type="ChEBI" id="CHEBI:57540"/>
        <dbReference type="ChEBI" id="CHEBI:57945"/>
        <dbReference type="ChEBI" id="CHEBI:67139"/>
        <dbReference type="EC" id="1.17.1.8"/>
    </reaction>
</comment>
<comment type="catalytic activity">
    <reaction evidence="1">
        <text>(S)-2,3,4,5-tetrahydrodipicolinate + NADP(+) + H2O = (2S,4S)-4-hydroxy-2,3,4,5-tetrahydrodipicolinate + NADPH + H(+)</text>
        <dbReference type="Rhea" id="RHEA:35331"/>
        <dbReference type="ChEBI" id="CHEBI:15377"/>
        <dbReference type="ChEBI" id="CHEBI:15378"/>
        <dbReference type="ChEBI" id="CHEBI:16845"/>
        <dbReference type="ChEBI" id="CHEBI:57783"/>
        <dbReference type="ChEBI" id="CHEBI:58349"/>
        <dbReference type="ChEBI" id="CHEBI:67139"/>
        <dbReference type="EC" id="1.17.1.8"/>
    </reaction>
</comment>
<comment type="pathway">
    <text evidence="1">Amino-acid biosynthesis; L-lysine biosynthesis via DAP pathway; (S)-tetrahydrodipicolinate from L-aspartate: step 4/4.</text>
</comment>
<comment type="subcellular location">
    <subcellularLocation>
        <location evidence="1">Cytoplasm</location>
    </subcellularLocation>
</comment>
<comment type="similarity">
    <text evidence="1">Belongs to the DapB family.</text>
</comment>
<comment type="caution">
    <text evidence="2">Was originally thought to be a dihydrodipicolinate reductase (DHDPR), catalyzing the conversion of dihydrodipicolinate to tetrahydrodipicolinate. However, it was shown in E.coli that the substrate of the enzymatic reaction is not dihydrodipicolinate (DHDP) but in fact (2S,4S)-4-hydroxy-2,3,4,5-tetrahydrodipicolinic acid (HTPA), the product released by the DapA-catalyzed reaction.</text>
</comment>
<sequence>MKEMKVIIAGPRGRMGHEAVLLMERTEHFNLVAAVDYKHGGEKISDLPGMPALDAPIYADLHTCLEEVEADVLLDLTTPEVGKQHVTLAVERGLRSVIGTTGFTEEELKQLTETAKEKAVGTIIAPNFAIGAVLMMKFSQMAAKYFQDVEVIELHHDQKLDAPSGTAVKTVELIRQNRESKQQGHPNEVEQLEGARGANVDGIHIHSVRLPGLIAHQEVMFGGDGQMLTVRHDSFNRASFMSGVKLSIETVMNLDHLVYGLENIID</sequence>
<protein>
    <recommendedName>
        <fullName evidence="1">4-hydroxy-tetrahydrodipicolinate reductase</fullName>
        <shortName evidence="1">HTPA reductase</shortName>
        <ecNumber evidence="1">1.17.1.8</ecNumber>
    </recommendedName>
</protein>
<reference key="1">
    <citation type="journal article" date="2007" name="J. Bacteriol.">
        <title>The complete genome sequence of Bacillus thuringiensis Al Hakam.</title>
        <authorList>
            <person name="Challacombe J.F."/>
            <person name="Altherr M.R."/>
            <person name="Xie G."/>
            <person name="Bhotika S.S."/>
            <person name="Brown N."/>
            <person name="Bruce D."/>
            <person name="Campbell C.S."/>
            <person name="Campbell M.L."/>
            <person name="Chen J."/>
            <person name="Chertkov O."/>
            <person name="Cleland C."/>
            <person name="Dimitrijevic M."/>
            <person name="Doggett N.A."/>
            <person name="Fawcett J.J."/>
            <person name="Glavina T."/>
            <person name="Goodwin L.A."/>
            <person name="Green L.D."/>
            <person name="Han C.S."/>
            <person name="Hill K.K."/>
            <person name="Hitchcock P."/>
            <person name="Jackson P.J."/>
            <person name="Keim P."/>
            <person name="Kewalramani A.R."/>
            <person name="Longmire J."/>
            <person name="Lucas S."/>
            <person name="Malfatti S."/>
            <person name="Martinez D."/>
            <person name="McMurry K."/>
            <person name="Meincke L.J."/>
            <person name="Misra M."/>
            <person name="Moseman B.L."/>
            <person name="Mundt M."/>
            <person name="Munk A.C."/>
            <person name="Okinaka R.T."/>
            <person name="Parson-Quintana B."/>
            <person name="Reilly L.P."/>
            <person name="Richardson P."/>
            <person name="Robinson D.L."/>
            <person name="Saunders E."/>
            <person name="Tapia R."/>
            <person name="Tesmer J.G."/>
            <person name="Thayer N."/>
            <person name="Thompson L.S."/>
            <person name="Tice H."/>
            <person name="Ticknor L.O."/>
            <person name="Wills P.L."/>
            <person name="Gilna P."/>
            <person name="Brettin T.S."/>
        </authorList>
    </citation>
    <scope>NUCLEOTIDE SEQUENCE [LARGE SCALE GENOMIC DNA]</scope>
    <source>
        <strain>Al Hakam</strain>
    </source>
</reference>
<organism>
    <name type="scientific">Bacillus thuringiensis (strain Al Hakam)</name>
    <dbReference type="NCBI Taxonomy" id="412694"/>
    <lineage>
        <taxon>Bacteria</taxon>
        <taxon>Bacillati</taxon>
        <taxon>Bacillota</taxon>
        <taxon>Bacilli</taxon>
        <taxon>Bacillales</taxon>
        <taxon>Bacillaceae</taxon>
        <taxon>Bacillus</taxon>
        <taxon>Bacillus cereus group</taxon>
    </lineage>
</organism>
<proteinExistence type="inferred from homology"/>
<keyword id="KW-0028">Amino-acid biosynthesis</keyword>
<keyword id="KW-0963">Cytoplasm</keyword>
<keyword id="KW-0220">Diaminopimelate biosynthesis</keyword>
<keyword id="KW-0457">Lysine biosynthesis</keyword>
<keyword id="KW-0520">NAD</keyword>
<keyword id="KW-0521">NADP</keyword>
<keyword id="KW-0560">Oxidoreductase</keyword>
<name>DAPB_BACAH</name>
<gene>
    <name evidence="1" type="primary">dapB</name>
    <name type="ordered locus">BALH_1386</name>
</gene>
<evidence type="ECO:0000255" key="1">
    <source>
        <dbReference type="HAMAP-Rule" id="MF_00102"/>
    </source>
</evidence>
<evidence type="ECO:0000305" key="2"/>
<dbReference type="EC" id="1.17.1.8" evidence="1"/>
<dbReference type="EMBL" id="CP000485">
    <property type="protein sequence ID" value="ABK84729.1"/>
    <property type="molecule type" value="Genomic_DNA"/>
</dbReference>
<dbReference type="RefSeq" id="WP_000661724.1">
    <property type="nucleotide sequence ID" value="NC_008600.1"/>
</dbReference>
<dbReference type="SMR" id="A0RBY6"/>
<dbReference type="KEGG" id="btl:BALH_1386"/>
<dbReference type="HOGENOM" id="CLU_047479_0_1_9"/>
<dbReference type="UniPathway" id="UPA00034">
    <property type="reaction ID" value="UER00018"/>
</dbReference>
<dbReference type="GO" id="GO:0005829">
    <property type="term" value="C:cytosol"/>
    <property type="evidence" value="ECO:0007669"/>
    <property type="project" value="TreeGrafter"/>
</dbReference>
<dbReference type="GO" id="GO:0008839">
    <property type="term" value="F:4-hydroxy-tetrahydrodipicolinate reductase"/>
    <property type="evidence" value="ECO:0007669"/>
    <property type="project" value="UniProtKB-EC"/>
</dbReference>
<dbReference type="GO" id="GO:0051287">
    <property type="term" value="F:NAD binding"/>
    <property type="evidence" value="ECO:0007669"/>
    <property type="project" value="UniProtKB-UniRule"/>
</dbReference>
<dbReference type="GO" id="GO:0050661">
    <property type="term" value="F:NADP binding"/>
    <property type="evidence" value="ECO:0007669"/>
    <property type="project" value="UniProtKB-UniRule"/>
</dbReference>
<dbReference type="GO" id="GO:0016726">
    <property type="term" value="F:oxidoreductase activity, acting on CH or CH2 groups, NAD or NADP as acceptor"/>
    <property type="evidence" value="ECO:0007669"/>
    <property type="project" value="UniProtKB-UniRule"/>
</dbReference>
<dbReference type="GO" id="GO:0019877">
    <property type="term" value="P:diaminopimelate biosynthetic process"/>
    <property type="evidence" value="ECO:0007669"/>
    <property type="project" value="UniProtKB-UniRule"/>
</dbReference>
<dbReference type="GO" id="GO:0009089">
    <property type="term" value="P:lysine biosynthetic process via diaminopimelate"/>
    <property type="evidence" value="ECO:0007669"/>
    <property type="project" value="UniProtKB-UniRule"/>
</dbReference>
<dbReference type="CDD" id="cd02274">
    <property type="entry name" value="DHDPR_N"/>
    <property type="match status" value="1"/>
</dbReference>
<dbReference type="FunFam" id="3.30.360.10:FF:000009">
    <property type="entry name" value="4-hydroxy-tetrahydrodipicolinate reductase"/>
    <property type="match status" value="1"/>
</dbReference>
<dbReference type="FunFam" id="3.40.50.720:FF:000180">
    <property type="entry name" value="4-hydroxy-tetrahydrodipicolinate reductase"/>
    <property type="match status" value="1"/>
</dbReference>
<dbReference type="Gene3D" id="3.30.360.10">
    <property type="entry name" value="Dihydrodipicolinate Reductase, domain 2"/>
    <property type="match status" value="1"/>
</dbReference>
<dbReference type="Gene3D" id="3.40.50.720">
    <property type="entry name" value="NAD(P)-binding Rossmann-like Domain"/>
    <property type="match status" value="1"/>
</dbReference>
<dbReference type="HAMAP" id="MF_00102">
    <property type="entry name" value="DapB"/>
    <property type="match status" value="1"/>
</dbReference>
<dbReference type="InterPro" id="IPR022663">
    <property type="entry name" value="DapB_C"/>
</dbReference>
<dbReference type="InterPro" id="IPR000846">
    <property type="entry name" value="DapB_N"/>
</dbReference>
<dbReference type="InterPro" id="IPR022664">
    <property type="entry name" value="DapB_N_CS"/>
</dbReference>
<dbReference type="InterPro" id="IPR023940">
    <property type="entry name" value="DHDPR_bac"/>
</dbReference>
<dbReference type="InterPro" id="IPR036291">
    <property type="entry name" value="NAD(P)-bd_dom_sf"/>
</dbReference>
<dbReference type="NCBIfam" id="TIGR00036">
    <property type="entry name" value="dapB"/>
    <property type="match status" value="1"/>
</dbReference>
<dbReference type="PANTHER" id="PTHR20836:SF0">
    <property type="entry name" value="4-HYDROXY-TETRAHYDRODIPICOLINATE REDUCTASE 1, CHLOROPLASTIC-RELATED"/>
    <property type="match status" value="1"/>
</dbReference>
<dbReference type="PANTHER" id="PTHR20836">
    <property type="entry name" value="DIHYDRODIPICOLINATE REDUCTASE"/>
    <property type="match status" value="1"/>
</dbReference>
<dbReference type="Pfam" id="PF05173">
    <property type="entry name" value="DapB_C"/>
    <property type="match status" value="1"/>
</dbReference>
<dbReference type="Pfam" id="PF01113">
    <property type="entry name" value="DapB_N"/>
    <property type="match status" value="1"/>
</dbReference>
<dbReference type="PIRSF" id="PIRSF000161">
    <property type="entry name" value="DHPR"/>
    <property type="match status" value="1"/>
</dbReference>
<dbReference type="SUPFAM" id="SSF55347">
    <property type="entry name" value="Glyceraldehyde-3-phosphate dehydrogenase-like, C-terminal domain"/>
    <property type="match status" value="1"/>
</dbReference>
<dbReference type="SUPFAM" id="SSF51735">
    <property type="entry name" value="NAD(P)-binding Rossmann-fold domains"/>
    <property type="match status" value="1"/>
</dbReference>
<dbReference type="PROSITE" id="PS01298">
    <property type="entry name" value="DAPB"/>
    <property type="match status" value="1"/>
</dbReference>
<feature type="chain" id="PRO_1000008535" description="4-hydroxy-tetrahydrodipicolinate reductase">
    <location>
        <begin position="1"/>
        <end position="266"/>
    </location>
</feature>
<feature type="active site" description="Proton donor/acceptor" evidence="1">
    <location>
        <position position="155"/>
    </location>
</feature>
<feature type="active site" description="Proton donor" evidence="1">
    <location>
        <position position="159"/>
    </location>
</feature>
<feature type="binding site" evidence="1">
    <location>
        <begin position="10"/>
        <end position="15"/>
    </location>
    <ligand>
        <name>NAD(+)</name>
        <dbReference type="ChEBI" id="CHEBI:57540"/>
    </ligand>
</feature>
<feature type="binding site" evidence="1">
    <location>
        <position position="38"/>
    </location>
    <ligand>
        <name>NADP(+)</name>
        <dbReference type="ChEBI" id="CHEBI:58349"/>
    </ligand>
</feature>
<feature type="binding site" evidence="1">
    <location>
        <begin position="99"/>
        <end position="101"/>
    </location>
    <ligand>
        <name>NAD(+)</name>
        <dbReference type="ChEBI" id="CHEBI:57540"/>
    </ligand>
</feature>
<feature type="binding site" evidence="1">
    <location>
        <begin position="125"/>
        <end position="128"/>
    </location>
    <ligand>
        <name>NAD(+)</name>
        <dbReference type="ChEBI" id="CHEBI:57540"/>
    </ligand>
</feature>
<feature type="binding site" evidence="1">
    <location>
        <position position="156"/>
    </location>
    <ligand>
        <name>(S)-2,3,4,5-tetrahydrodipicolinate</name>
        <dbReference type="ChEBI" id="CHEBI:16845"/>
    </ligand>
</feature>
<feature type="binding site" evidence="1">
    <location>
        <begin position="165"/>
        <end position="166"/>
    </location>
    <ligand>
        <name>(S)-2,3,4,5-tetrahydrodipicolinate</name>
        <dbReference type="ChEBI" id="CHEBI:16845"/>
    </ligand>
</feature>
<accession>A0RBY6</accession>